<proteinExistence type="inferred from homology"/>
<protein>
    <recommendedName>
        <fullName evidence="1">dCTP deaminase</fullName>
        <ecNumber evidence="1">3.5.4.13</ecNumber>
    </recommendedName>
    <alternativeName>
        <fullName evidence="1">Deoxycytidine triphosphate deaminase</fullName>
    </alternativeName>
</protein>
<reference key="1">
    <citation type="journal article" date="2008" name="Appl. Environ. Microbiol.">
        <title>The genome sequence of the metal-mobilizing, extremely thermoacidophilic archaeon Metallosphaera sedula provides insights into bioleaching-associated metabolism.</title>
        <authorList>
            <person name="Auernik K.S."/>
            <person name="Maezato Y."/>
            <person name="Blum P.H."/>
            <person name="Kelly R.M."/>
        </authorList>
    </citation>
    <scope>NUCLEOTIDE SEQUENCE [LARGE SCALE GENOMIC DNA]</scope>
    <source>
        <strain>ATCC 51363 / DSM 5348 / JCM 9185 / NBRC 15509 / TH2</strain>
    </source>
</reference>
<organism>
    <name type="scientific">Metallosphaera sedula (strain ATCC 51363 / DSM 5348 / JCM 9185 / NBRC 15509 / TH2)</name>
    <dbReference type="NCBI Taxonomy" id="399549"/>
    <lineage>
        <taxon>Archaea</taxon>
        <taxon>Thermoproteota</taxon>
        <taxon>Thermoprotei</taxon>
        <taxon>Sulfolobales</taxon>
        <taxon>Sulfolobaceae</taxon>
        <taxon>Metallosphaera</taxon>
    </lineage>
</organism>
<name>DCD_METS5</name>
<comment type="function">
    <text evidence="1">Catalyzes the deamination of dCTP to dUTP.</text>
</comment>
<comment type="catalytic activity">
    <reaction evidence="1">
        <text>dCTP + H2O + H(+) = dUTP + NH4(+)</text>
        <dbReference type="Rhea" id="RHEA:22680"/>
        <dbReference type="ChEBI" id="CHEBI:15377"/>
        <dbReference type="ChEBI" id="CHEBI:15378"/>
        <dbReference type="ChEBI" id="CHEBI:28938"/>
        <dbReference type="ChEBI" id="CHEBI:61481"/>
        <dbReference type="ChEBI" id="CHEBI:61555"/>
        <dbReference type="EC" id="3.5.4.13"/>
    </reaction>
</comment>
<comment type="pathway">
    <text evidence="1">Pyrimidine metabolism; dUMP biosynthesis; dUMP from dCTP (dUTP route): step 1/2.</text>
</comment>
<comment type="subunit">
    <text evidence="1">Homotrimer.</text>
</comment>
<comment type="similarity">
    <text evidence="1">Belongs to the dCTP deaminase family.</text>
</comment>
<sequence>MILGDRDLKYYLEKKWILVDPLTEDSVRENGIDMRVGGEIARFKNVDRPFEEGMNPDDFFVRERGNEFVIWPNEHVLMVTEEYLRLPQDIMAFVNMRSSFARLGLLVPPTIVDAGFEGQLTIEVMGSGFPVKIRRGTRFLHLIFAKTLTPVENPYKGKYQGQRGVTIPKFTK</sequence>
<feature type="chain" id="PRO_1000071477" description="dCTP deaminase">
    <location>
        <begin position="1"/>
        <end position="172"/>
    </location>
</feature>
<feature type="active site" description="Proton donor/acceptor" evidence="1">
    <location>
        <position position="123"/>
    </location>
</feature>
<feature type="binding site" evidence="1">
    <location>
        <begin position="97"/>
        <end position="102"/>
    </location>
    <ligand>
        <name>dCTP</name>
        <dbReference type="ChEBI" id="CHEBI:61481"/>
    </ligand>
</feature>
<feature type="binding site" evidence="1">
    <location>
        <position position="113"/>
    </location>
    <ligand>
        <name>dCTP</name>
        <dbReference type="ChEBI" id="CHEBI:61481"/>
    </ligand>
</feature>
<feature type="binding site" evidence="1">
    <location>
        <position position="155"/>
    </location>
    <ligand>
        <name>dCTP</name>
        <dbReference type="ChEBI" id="CHEBI:61481"/>
    </ligand>
</feature>
<feature type="binding site" evidence="1">
    <location>
        <position position="162"/>
    </location>
    <ligand>
        <name>dCTP</name>
        <dbReference type="ChEBI" id="CHEBI:61481"/>
    </ligand>
</feature>
<keyword id="KW-0378">Hydrolase</keyword>
<keyword id="KW-0546">Nucleotide metabolism</keyword>
<keyword id="KW-0547">Nucleotide-binding</keyword>
<keyword id="KW-1185">Reference proteome</keyword>
<gene>
    <name evidence="1" type="primary">dcd</name>
    <name type="ordered locus">Msed_0151</name>
</gene>
<accession>A4YD26</accession>
<evidence type="ECO:0000255" key="1">
    <source>
        <dbReference type="HAMAP-Rule" id="MF_00146"/>
    </source>
</evidence>
<dbReference type="EC" id="3.5.4.13" evidence="1"/>
<dbReference type="EMBL" id="CP000682">
    <property type="protein sequence ID" value="ABP94328.1"/>
    <property type="molecule type" value="Genomic_DNA"/>
</dbReference>
<dbReference type="RefSeq" id="WP_011921296.1">
    <property type="nucleotide sequence ID" value="NZ_CP139956.1"/>
</dbReference>
<dbReference type="SMR" id="A4YD26"/>
<dbReference type="STRING" id="399549.Msed_0151"/>
<dbReference type="GeneID" id="97614816"/>
<dbReference type="KEGG" id="mse:Msed_0151"/>
<dbReference type="eggNOG" id="arCOG04048">
    <property type="taxonomic scope" value="Archaea"/>
</dbReference>
<dbReference type="HOGENOM" id="CLU_087476_3_0_2"/>
<dbReference type="UniPathway" id="UPA00610">
    <property type="reaction ID" value="UER00665"/>
</dbReference>
<dbReference type="Proteomes" id="UP000000242">
    <property type="component" value="Chromosome"/>
</dbReference>
<dbReference type="GO" id="GO:0008829">
    <property type="term" value="F:dCTP deaminase activity"/>
    <property type="evidence" value="ECO:0007669"/>
    <property type="project" value="UniProtKB-UniRule"/>
</dbReference>
<dbReference type="GO" id="GO:0000166">
    <property type="term" value="F:nucleotide binding"/>
    <property type="evidence" value="ECO:0007669"/>
    <property type="project" value="UniProtKB-KW"/>
</dbReference>
<dbReference type="GO" id="GO:0006226">
    <property type="term" value="P:dUMP biosynthetic process"/>
    <property type="evidence" value="ECO:0007669"/>
    <property type="project" value="UniProtKB-UniPathway"/>
</dbReference>
<dbReference type="GO" id="GO:0006229">
    <property type="term" value="P:dUTP biosynthetic process"/>
    <property type="evidence" value="ECO:0007669"/>
    <property type="project" value="UniProtKB-UniRule"/>
</dbReference>
<dbReference type="CDD" id="cd07557">
    <property type="entry name" value="trimeric_dUTPase"/>
    <property type="match status" value="1"/>
</dbReference>
<dbReference type="Gene3D" id="2.70.40.10">
    <property type="match status" value="1"/>
</dbReference>
<dbReference type="HAMAP" id="MF_00146">
    <property type="entry name" value="dCTP_deaminase"/>
    <property type="match status" value="1"/>
</dbReference>
<dbReference type="InterPro" id="IPR011962">
    <property type="entry name" value="dCTP_deaminase"/>
</dbReference>
<dbReference type="InterPro" id="IPR036157">
    <property type="entry name" value="dUTPase-like_sf"/>
</dbReference>
<dbReference type="InterPro" id="IPR033704">
    <property type="entry name" value="dUTPase_trimeric"/>
</dbReference>
<dbReference type="NCBIfam" id="TIGR02274">
    <property type="entry name" value="dCTP_deam"/>
    <property type="match status" value="1"/>
</dbReference>
<dbReference type="PANTHER" id="PTHR42680">
    <property type="entry name" value="DCTP DEAMINASE"/>
    <property type="match status" value="1"/>
</dbReference>
<dbReference type="PANTHER" id="PTHR42680:SF3">
    <property type="entry name" value="DCTP DEAMINASE"/>
    <property type="match status" value="1"/>
</dbReference>
<dbReference type="Pfam" id="PF22769">
    <property type="entry name" value="DCD"/>
    <property type="match status" value="1"/>
</dbReference>
<dbReference type="SUPFAM" id="SSF51283">
    <property type="entry name" value="dUTPase-like"/>
    <property type="match status" value="1"/>
</dbReference>